<gene>
    <name type="ORF">PITG_13069</name>
</gene>
<sequence>MRVEVVRAPGPLNRPALAEAIDTLGKKSATVRPSSATHRATAQTLSHEITSTDLFATSTATEQQQTLLLAINDDDGAVMGFLKTGVKHLFYLNPRGEYTEIDPICVLDFYVDEVWQRRGVGLQLFQRLLQEENTTPAQLAYDRPSPKLFAFLKKHVGLTEYFPQPNRFVVFDAYFQSRE</sequence>
<comment type="function">
    <text evidence="1">Specifically acetylates 'Lys-40' in alpha-tubulin on the lumenal side of microtubules. Promotes microtubule destabilization and accelerates microtubule dynamics; this activity may be independent of acetylation activity. Acetylates alpha-tubulin with a slow enzymatic rate, due to a catalytic site that is not optimized for acetyl transfer. Enters the microtubule through each end and diffuses quickly throughout the lumen of microtubules. Acetylates only long/old microtubules because of its slow acetylation rate since it does not have time to act on dynamically unstable microtubules before the enzyme is released.</text>
</comment>
<comment type="catalytic activity">
    <reaction evidence="1">
        <text>L-lysyl-[alpha-tubulin] + acetyl-CoA = N(6)-acetyl-L-lysyl-[alpha-tubulin] + CoA + H(+)</text>
        <dbReference type="Rhea" id="RHEA:15277"/>
        <dbReference type="Rhea" id="RHEA-COMP:11278"/>
        <dbReference type="Rhea" id="RHEA-COMP:11279"/>
        <dbReference type="ChEBI" id="CHEBI:15378"/>
        <dbReference type="ChEBI" id="CHEBI:29969"/>
        <dbReference type="ChEBI" id="CHEBI:57287"/>
        <dbReference type="ChEBI" id="CHEBI:57288"/>
        <dbReference type="ChEBI" id="CHEBI:61930"/>
        <dbReference type="EC" id="2.3.1.108"/>
    </reaction>
</comment>
<comment type="similarity">
    <text evidence="1">Belongs to the acetyltransferase ATAT1 family.</text>
</comment>
<organism>
    <name type="scientific">Phytophthora infestans (strain T30-4)</name>
    <name type="common">Potato late blight agent</name>
    <dbReference type="NCBI Taxonomy" id="403677"/>
    <lineage>
        <taxon>Eukaryota</taxon>
        <taxon>Sar</taxon>
        <taxon>Stramenopiles</taxon>
        <taxon>Oomycota</taxon>
        <taxon>Peronosporales</taxon>
        <taxon>Peronosporaceae</taxon>
        <taxon>Phytophthora</taxon>
    </lineage>
</organism>
<name>ATAT_PHYIT</name>
<accession>D0NK82</accession>
<protein>
    <recommendedName>
        <fullName evidence="1">Alpha-tubulin N-acetyltransferase</fullName>
        <shortName evidence="1">Alpha-TAT</shortName>
        <shortName evidence="1">TAT</shortName>
        <ecNumber evidence="1">2.3.1.108</ecNumber>
    </recommendedName>
    <alternativeName>
        <fullName evidence="1">Acetyltransferase mec-17 homolog</fullName>
    </alternativeName>
</protein>
<proteinExistence type="inferred from homology"/>
<keyword id="KW-0012">Acyltransferase</keyword>
<keyword id="KW-1185">Reference proteome</keyword>
<keyword id="KW-0808">Transferase</keyword>
<reference key="1">
    <citation type="journal article" date="2009" name="Nature">
        <title>Genome sequence and analysis of the Irish potato famine pathogen Phytophthora infestans.</title>
        <authorList>
            <consortium name="The Broad Institute Genome Sequencing Platform"/>
            <person name="Haas B.J."/>
            <person name="Kamoun S."/>
            <person name="Zody M.C."/>
            <person name="Jiang R.H."/>
            <person name="Handsaker R.E."/>
            <person name="Cano L.M."/>
            <person name="Grabherr M."/>
            <person name="Kodira C.D."/>
            <person name="Raffaele S."/>
            <person name="Torto-Alalibo T."/>
            <person name="Bozkurt T.O."/>
            <person name="Ah-Fong A.M."/>
            <person name="Alvarado L."/>
            <person name="Anderson V.L."/>
            <person name="Armstrong M.R."/>
            <person name="Avrova A."/>
            <person name="Baxter L."/>
            <person name="Beynon J."/>
            <person name="Boevink P.C."/>
            <person name="Bollmann S.R."/>
            <person name="Bos J.I."/>
            <person name="Bulone V."/>
            <person name="Cai G."/>
            <person name="Cakir C."/>
            <person name="Carrington J.C."/>
            <person name="Chawner M."/>
            <person name="Conti L."/>
            <person name="Costanzo S."/>
            <person name="Ewan R."/>
            <person name="Fahlgren N."/>
            <person name="Fischbach M.A."/>
            <person name="Fugelstad J."/>
            <person name="Gilroy E.M."/>
            <person name="Gnerre S."/>
            <person name="Green P.J."/>
            <person name="Grenville-Briggs L.J."/>
            <person name="Griffith J."/>
            <person name="Grunwald N.J."/>
            <person name="Horn K."/>
            <person name="Horner N.R."/>
            <person name="Hu C.H."/>
            <person name="Huitema E."/>
            <person name="Jeong D.H."/>
            <person name="Jones A.M."/>
            <person name="Jones J.D."/>
            <person name="Jones R.W."/>
            <person name="Karlsson E.K."/>
            <person name="Kunjeti S.G."/>
            <person name="Lamour K."/>
            <person name="Liu Z."/>
            <person name="Ma L."/>
            <person name="Maclean D."/>
            <person name="Chibucos M.C."/>
            <person name="McDonald H."/>
            <person name="McWalters J."/>
            <person name="Meijer H.J."/>
            <person name="Morgan W."/>
            <person name="Morris P.F."/>
            <person name="Munro C.A."/>
            <person name="O'Neill K."/>
            <person name="Ospina-Giraldo M."/>
            <person name="Pinzon A."/>
            <person name="Pritchard L."/>
            <person name="Ramsahoye B."/>
            <person name="Ren Q."/>
            <person name="Restrepo S."/>
            <person name="Roy S."/>
            <person name="Sadanandom A."/>
            <person name="Savidor A."/>
            <person name="Schornack S."/>
            <person name="Schwartz D.C."/>
            <person name="Schumann U.D."/>
            <person name="Schwessinger B."/>
            <person name="Seyer L."/>
            <person name="Sharpe T."/>
            <person name="Silvar C."/>
            <person name="Song J."/>
            <person name="Studholme D.J."/>
            <person name="Sykes S."/>
            <person name="Thines M."/>
            <person name="van de Vondervoort P.J."/>
            <person name="Phuntumart V."/>
            <person name="Wawra S."/>
            <person name="Weide R."/>
            <person name="Win J."/>
            <person name="Young C."/>
            <person name="Zhou S."/>
            <person name="Fry W."/>
            <person name="Meyers B.C."/>
            <person name="van West P."/>
            <person name="Ristaino J."/>
            <person name="Govers F."/>
            <person name="Birch P.R."/>
            <person name="Whisson S.C."/>
            <person name="Judelson H.S."/>
            <person name="Nusbaum C."/>
        </authorList>
    </citation>
    <scope>NUCLEOTIDE SEQUENCE [LARGE SCALE GENOMIC DNA]</scope>
    <source>
        <strain>T30-4</strain>
    </source>
</reference>
<feature type="chain" id="PRO_0000402088" description="Alpha-tubulin N-acetyltransferase">
    <location>
        <begin position="1"/>
        <end position="179"/>
    </location>
</feature>
<feature type="domain" description="N-acetyltransferase" evidence="1">
    <location>
        <begin position="1"/>
        <end position="175"/>
    </location>
</feature>
<feature type="binding site" evidence="1">
    <location>
        <begin position="109"/>
        <end position="122"/>
    </location>
    <ligand>
        <name>acetyl-CoA</name>
        <dbReference type="ChEBI" id="CHEBI:57288"/>
    </ligand>
</feature>
<feature type="binding site" evidence="1">
    <location>
        <begin position="145"/>
        <end position="154"/>
    </location>
    <ligand>
        <name>acetyl-CoA</name>
        <dbReference type="ChEBI" id="CHEBI:57288"/>
    </ligand>
</feature>
<dbReference type="EC" id="2.3.1.108" evidence="1"/>
<dbReference type="EMBL" id="DS028142">
    <property type="protein sequence ID" value="EEY59919.1"/>
    <property type="molecule type" value="Genomic_DNA"/>
</dbReference>
<dbReference type="RefSeq" id="XP_002900604.1">
    <property type="nucleotide sequence ID" value="XM_002900558.1"/>
</dbReference>
<dbReference type="SMR" id="D0NK82"/>
<dbReference type="EnsemblProtists" id="PITG_13069T0">
    <property type="protein sequence ID" value="PITG_13069T0"/>
    <property type="gene ID" value="PITG_13069"/>
</dbReference>
<dbReference type="GeneID" id="9474588"/>
<dbReference type="KEGG" id="pif:PITG_13069"/>
<dbReference type="VEuPathDB" id="FungiDB:PITG_13069"/>
<dbReference type="eggNOG" id="KOG4601">
    <property type="taxonomic scope" value="Eukaryota"/>
</dbReference>
<dbReference type="HOGENOM" id="CLU_025013_3_0_1"/>
<dbReference type="InParanoid" id="D0NK82"/>
<dbReference type="OMA" id="IKQPNNF"/>
<dbReference type="OrthoDB" id="447510at2759"/>
<dbReference type="Proteomes" id="UP000006643">
    <property type="component" value="Partially assembled WGS sequence"/>
</dbReference>
<dbReference type="GO" id="GO:0005874">
    <property type="term" value="C:microtubule"/>
    <property type="evidence" value="ECO:0007669"/>
    <property type="project" value="InterPro"/>
</dbReference>
<dbReference type="GO" id="GO:0019799">
    <property type="term" value="F:tubulin N-acetyltransferase activity"/>
    <property type="evidence" value="ECO:0007669"/>
    <property type="project" value="UniProtKB-UniRule"/>
</dbReference>
<dbReference type="GO" id="GO:0070507">
    <property type="term" value="P:regulation of microtubule cytoskeleton organization"/>
    <property type="evidence" value="ECO:0007669"/>
    <property type="project" value="UniProtKB-UniRule"/>
</dbReference>
<dbReference type="CDD" id="cd04301">
    <property type="entry name" value="NAT_SF"/>
    <property type="match status" value="1"/>
</dbReference>
<dbReference type="Gene3D" id="3.40.630.30">
    <property type="match status" value="1"/>
</dbReference>
<dbReference type="HAMAP" id="MF_03130">
    <property type="entry name" value="mec17"/>
    <property type="match status" value="1"/>
</dbReference>
<dbReference type="InterPro" id="IPR016181">
    <property type="entry name" value="Acyl_CoA_acyltransferase"/>
</dbReference>
<dbReference type="InterPro" id="IPR038746">
    <property type="entry name" value="Atat"/>
</dbReference>
<dbReference type="InterPro" id="IPR007965">
    <property type="entry name" value="GNAT_ATAT"/>
</dbReference>
<dbReference type="PANTHER" id="PTHR12327">
    <property type="entry name" value="ALPHA-TUBULIN N-ACETYLTRANSFERASE 1"/>
    <property type="match status" value="1"/>
</dbReference>
<dbReference type="PANTHER" id="PTHR12327:SF0">
    <property type="entry name" value="ALPHA-TUBULIN N-ACETYLTRANSFERASE 1"/>
    <property type="match status" value="1"/>
</dbReference>
<dbReference type="Pfam" id="PF05301">
    <property type="entry name" value="Acetyltransf_16"/>
    <property type="match status" value="1"/>
</dbReference>
<dbReference type="SUPFAM" id="SSF55729">
    <property type="entry name" value="Acyl-CoA N-acyltransferases (Nat)"/>
    <property type="match status" value="1"/>
</dbReference>
<dbReference type="PROSITE" id="PS51730">
    <property type="entry name" value="GNAT_ATAT"/>
    <property type="match status" value="1"/>
</dbReference>
<evidence type="ECO:0000255" key="1">
    <source>
        <dbReference type="HAMAP-Rule" id="MF_03130"/>
    </source>
</evidence>